<protein>
    <recommendedName>
        <fullName evidence="1">Protein-methionine-sulfoxide reductase heme-binding subunit MsrQ</fullName>
    </recommendedName>
    <alternativeName>
        <fullName evidence="1">Flavocytochrome MsrQ</fullName>
    </alternativeName>
</protein>
<reference key="1">
    <citation type="journal article" date="2010" name="PLoS Genet.">
        <title>Genome sequence of the plant growth promoting endophytic bacterium Enterobacter sp. 638.</title>
        <authorList>
            <person name="Taghavi S."/>
            <person name="van der Lelie D."/>
            <person name="Hoffman A."/>
            <person name="Zhang Y.B."/>
            <person name="Walla M.D."/>
            <person name="Vangronsveld J."/>
            <person name="Newman L."/>
            <person name="Monchy S."/>
        </authorList>
    </citation>
    <scope>NUCLEOTIDE SEQUENCE [LARGE SCALE GENOMIC DNA]</scope>
    <source>
        <strain>638</strain>
    </source>
</reference>
<keyword id="KW-0997">Cell inner membrane</keyword>
<keyword id="KW-1003">Cell membrane</keyword>
<keyword id="KW-0249">Electron transport</keyword>
<keyword id="KW-0285">Flavoprotein</keyword>
<keyword id="KW-0288">FMN</keyword>
<keyword id="KW-0349">Heme</keyword>
<keyword id="KW-0408">Iron</keyword>
<keyword id="KW-0472">Membrane</keyword>
<keyword id="KW-0479">Metal-binding</keyword>
<keyword id="KW-0812">Transmembrane</keyword>
<keyword id="KW-1133">Transmembrane helix</keyword>
<keyword id="KW-0813">Transport</keyword>
<dbReference type="EMBL" id="CP000653">
    <property type="protein sequence ID" value="ABP62348.1"/>
    <property type="molecule type" value="Genomic_DNA"/>
</dbReference>
<dbReference type="RefSeq" id="WP_015960670.1">
    <property type="nucleotide sequence ID" value="NC_009436.1"/>
</dbReference>
<dbReference type="SMR" id="A4WF68"/>
<dbReference type="STRING" id="399742.Ent638_3691"/>
<dbReference type="KEGG" id="ent:Ent638_3691"/>
<dbReference type="eggNOG" id="COG2717">
    <property type="taxonomic scope" value="Bacteria"/>
</dbReference>
<dbReference type="HOGENOM" id="CLU_080662_1_0_6"/>
<dbReference type="OrthoDB" id="9788328at2"/>
<dbReference type="Proteomes" id="UP000000230">
    <property type="component" value="Chromosome"/>
</dbReference>
<dbReference type="GO" id="GO:0005886">
    <property type="term" value="C:plasma membrane"/>
    <property type="evidence" value="ECO:0007669"/>
    <property type="project" value="UniProtKB-SubCell"/>
</dbReference>
<dbReference type="GO" id="GO:0009055">
    <property type="term" value="F:electron transfer activity"/>
    <property type="evidence" value="ECO:0007669"/>
    <property type="project" value="UniProtKB-UniRule"/>
</dbReference>
<dbReference type="GO" id="GO:0010181">
    <property type="term" value="F:FMN binding"/>
    <property type="evidence" value="ECO:0007669"/>
    <property type="project" value="UniProtKB-UniRule"/>
</dbReference>
<dbReference type="GO" id="GO:0020037">
    <property type="term" value="F:heme binding"/>
    <property type="evidence" value="ECO:0007669"/>
    <property type="project" value="UniProtKB-UniRule"/>
</dbReference>
<dbReference type="GO" id="GO:0046872">
    <property type="term" value="F:metal ion binding"/>
    <property type="evidence" value="ECO:0007669"/>
    <property type="project" value="UniProtKB-KW"/>
</dbReference>
<dbReference type="GO" id="GO:0016679">
    <property type="term" value="F:oxidoreductase activity, acting on diphenols and related substances as donors"/>
    <property type="evidence" value="ECO:0007669"/>
    <property type="project" value="TreeGrafter"/>
</dbReference>
<dbReference type="GO" id="GO:0030091">
    <property type="term" value="P:protein repair"/>
    <property type="evidence" value="ECO:0007669"/>
    <property type="project" value="UniProtKB-UniRule"/>
</dbReference>
<dbReference type="HAMAP" id="MF_01207">
    <property type="entry name" value="MsrQ"/>
    <property type="match status" value="1"/>
</dbReference>
<dbReference type="InterPro" id="IPR013130">
    <property type="entry name" value="Fe3_Rdtase_TM_dom"/>
</dbReference>
<dbReference type="InterPro" id="IPR022837">
    <property type="entry name" value="MsrQ-like"/>
</dbReference>
<dbReference type="NCBIfam" id="NF003832">
    <property type="entry name" value="PRK05419.1-4"/>
    <property type="match status" value="1"/>
</dbReference>
<dbReference type="PANTHER" id="PTHR36964">
    <property type="entry name" value="PROTEIN-METHIONINE-SULFOXIDE REDUCTASE HEME-BINDING SUBUNIT MSRQ"/>
    <property type="match status" value="1"/>
</dbReference>
<dbReference type="PANTHER" id="PTHR36964:SF1">
    <property type="entry name" value="PROTEIN-METHIONINE-SULFOXIDE REDUCTASE HEME-BINDING SUBUNIT MSRQ"/>
    <property type="match status" value="1"/>
</dbReference>
<dbReference type="Pfam" id="PF01794">
    <property type="entry name" value="Ferric_reduct"/>
    <property type="match status" value="1"/>
</dbReference>
<sequence>MRLTAKQITWLKVILHLAGLLPFIWLFWAASQGYFSADPAKDIQHFTGRMALKFLLASLLISPLARYAKQPLLIRTRRLLGLWCFAWATLHLTSYALLELGINNLALLGSELISRPYLTLGIVSWVILFALTLTSTQYAQRKLGRRWQFLHNFVYLVAILTPIHYLWSVKILSPQPVIYALLALGLLAWRYKKFRQWWR</sequence>
<name>MSRQ_ENT38</name>
<accession>A4WF68</accession>
<proteinExistence type="inferred from homology"/>
<comment type="function">
    <text evidence="1">Part of the MsrPQ system that repairs oxidized periplasmic proteins containing methionine sulfoxide residues (Met-O), using respiratory chain electrons. Thus protects these proteins from oxidative-stress damage caused by reactive species of oxygen and chlorine generated by the host defense mechanisms. MsrPQ is essential for the maintenance of envelope integrity under bleach stress, rescuing a wide series of structurally unrelated periplasmic proteins from methionine oxidation. MsrQ provides electrons for reduction to the reductase catalytic subunit MsrP, using the quinone pool of the respiratory chain.</text>
</comment>
<comment type="cofactor">
    <cofactor evidence="1">
        <name>FMN</name>
        <dbReference type="ChEBI" id="CHEBI:58210"/>
    </cofactor>
    <text evidence="1">Binds 1 FMN per subunit.</text>
</comment>
<comment type="cofactor">
    <cofactor evidence="1">
        <name>heme b</name>
        <dbReference type="ChEBI" id="CHEBI:60344"/>
    </cofactor>
    <text evidence="1">Binds 1 heme b (iron(II)-protoporphyrin IX) group per subunit.</text>
</comment>
<comment type="subunit">
    <text evidence="1">Heterodimer of a catalytic subunit (MsrP) and a heme-binding subunit (MsrQ).</text>
</comment>
<comment type="subcellular location">
    <subcellularLocation>
        <location evidence="1">Cell inner membrane</location>
        <topology evidence="1">Multi-pass membrane protein</topology>
    </subcellularLocation>
</comment>
<comment type="similarity">
    <text evidence="1">Belongs to the MsrQ family.</text>
</comment>
<gene>
    <name evidence="1" type="primary">msrQ</name>
    <name type="ordered locus">Ent638_3691</name>
</gene>
<evidence type="ECO:0000255" key="1">
    <source>
        <dbReference type="HAMAP-Rule" id="MF_01207"/>
    </source>
</evidence>
<organism>
    <name type="scientific">Enterobacter sp. (strain 638)</name>
    <dbReference type="NCBI Taxonomy" id="399742"/>
    <lineage>
        <taxon>Bacteria</taxon>
        <taxon>Pseudomonadati</taxon>
        <taxon>Pseudomonadota</taxon>
        <taxon>Gammaproteobacteria</taxon>
        <taxon>Enterobacterales</taxon>
        <taxon>Enterobacteriaceae</taxon>
        <taxon>Enterobacter</taxon>
    </lineage>
</organism>
<feature type="chain" id="PRO_1000066174" description="Protein-methionine-sulfoxide reductase heme-binding subunit MsrQ">
    <location>
        <begin position="1"/>
        <end position="199"/>
    </location>
</feature>
<feature type="transmembrane region" description="Helical" evidence="1">
    <location>
        <begin position="8"/>
        <end position="28"/>
    </location>
</feature>
<feature type="transmembrane region" description="Helical" evidence="1">
    <location>
        <begin position="82"/>
        <end position="102"/>
    </location>
</feature>
<feature type="transmembrane region" description="Helical" evidence="1">
    <location>
        <begin position="116"/>
        <end position="136"/>
    </location>
</feature>
<feature type="transmembrane region" description="Helical" evidence="1">
    <location>
        <begin position="149"/>
        <end position="169"/>
    </location>
</feature>
<feature type="transmembrane region" description="Helical" evidence="1">
    <location>
        <begin position="171"/>
        <end position="191"/>
    </location>
</feature>